<proteinExistence type="inferred from homology"/>
<gene>
    <name evidence="1" type="primary">recF</name>
    <name type="ordered locus">FTF0762c</name>
</gene>
<protein>
    <recommendedName>
        <fullName evidence="1">DNA replication and repair protein RecF</fullName>
    </recommendedName>
</protein>
<feature type="chain" id="PRO_1000205486" description="DNA replication and repair protein RecF">
    <location>
        <begin position="1"/>
        <end position="349"/>
    </location>
</feature>
<feature type="binding site" evidence="1">
    <location>
        <begin position="30"/>
        <end position="37"/>
    </location>
    <ligand>
        <name>ATP</name>
        <dbReference type="ChEBI" id="CHEBI:30616"/>
    </ligand>
</feature>
<accession>Q14I72</accession>
<dbReference type="EMBL" id="AM286280">
    <property type="protein sequence ID" value="CAL08778.1"/>
    <property type="molecule type" value="Genomic_DNA"/>
</dbReference>
<dbReference type="RefSeq" id="WP_003020619.1">
    <property type="nucleotide sequence ID" value="NC_008245.1"/>
</dbReference>
<dbReference type="SMR" id="Q14I72"/>
<dbReference type="KEGG" id="ftf:FTF0762c"/>
<dbReference type="HOGENOM" id="CLU_040267_0_0_6"/>
<dbReference type="GO" id="GO:0005737">
    <property type="term" value="C:cytoplasm"/>
    <property type="evidence" value="ECO:0007669"/>
    <property type="project" value="UniProtKB-SubCell"/>
</dbReference>
<dbReference type="GO" id="GO:0005524">
    <property type="term" value="F:ATP binding"/>
    <property type="evidence" value="ECO:0007669"/>
    <property type="project" value="UniProtKB-UniRule"/>
</dbReference>
<dbReference type="GO" id="GO:0003697">
    <property type="term" value="F:single-stranded DNA binding"/>
    <property type="evidence" value="ECO:0007669"/>
    <property type="project" value="UniProtKB-UniRule"/>
</dbReference>
<dbReference type="GO" id="GO:0006260">
    <property type="term" value="P:DNA replication"/>
    <property type="evidence" value="ECO:0007669"/>
    <property type="project" value="UniProtKB-UniRule"/>
</dbReference>
<dbReference type="GO" id="GO:0000731">
    <property type="term" value="P:DNA synthesis involved in DNA repair"/>
    <property type="evidence" value="ECO:0007669"/>
    <property type="project" value="TreeGrafter"/>
</dbReference>
<dbReference type="GO" id="GO:0006302">
    <property type="term" value="P:double-strand break repair"/>
    <property type="evidence" value="ECO:0007669"/>
    <property type="project" value="TreeGrafter"/>
</dbReference>
<dbReference type="GO" id="GO:0009432">
    <property type="term" value="P:SOS response"/>
    <property type="evidence" value="ECO:0007669"/>
    <property type="project" value="UniProtKB-UniRule"/>
</dbReference>
<dbReference type="Gene3D" id="3.40.50.300">
    <property type="entry name" value="P-loop containing nucleotide triphosphate hydrolases"/>
    <property type="match status" value="1"/>
</dbReference>
<dbReference type="Gene3D" id="1.20.1050.90">
    <property type="entry name" value="RecF/RecN/SMC, N-terminal domain"/>
    <property type="match status" value="1"/>
</dbReference>
<dbReference type="HAMAP" id="MF_00365">
    <property type="entry name" value="RecF"/>
    <property type="match status" value="1"/>
</dbReference>
<dbReference type="InterPro" id="IPR001238">
    <property type="entry name" value="DNA-binding_RecF"/>
</dbReference>
<dbReference type="InterPro" id="IPR018078">
    <property type="entry name" value="DNA-binding_RecF_CS"/>
</dbReference>
<dbReference type="InterPro" id="IPR027417">
    <property type="entry name" value="P-loop_NTPase"/>
</dbReference>
<dbReference type="InterPro" id="IPR003395">
    <property type="entry name" value="RecF/RecN/SMC_N"/>
</dbReference>
<dbReference type="InterPro" id="IPR042174">
    <property type="entry name" value="RecF_2"/>
</dbReference>
<dbReference type="NCBIfam" id="TIGR00611">
    <property type="entry name" value="recf"/>
    <property type="match status" value="1"/>
</dbReference>
<dbReference type="PANTHER" id="PTHR32182">
    <property type="entry name" value="DNA REPLICATION AND REPAIR PROTEIN RECF"/>
    <property type="match status" value="1"/>
</dbReference>
<dbReference type="PANTHER" id="PTHR32182:SF0">
    <property type="entry name" value="DNA REPLICATION AND REPAIR PROTEIN RECF"/>
    <property type="match status" value="1"/>
</dbReference>
<dbReference type="Pfam" id="PF02463">
    <property type="entry name" value="SMC_N"/>
    <property type="match status" value="1"/>
</dbReference>
<dbReference type="SUPFAM" id="SSF52540">
    <property type="entry name" value="P-loop containing nucleoside triphosphate hydrolases"/>
    <property type="match status" value="1"/>
</dbReference>
<dbReference type="PROSITE" id="PS00618">
    <property type="entry name" value="RECF_2"/>
    <property type="match status" value="1"/>
</dbReference>
<comment type="function">
    <text evidence="1">The RecF protein is involved in DNA metabolism; it is required for DNA replication and normal SOS inducibility. RecF binds preferentially to single-stranded, linear DNA. It also seems to bind ATP.</text>
</comment>
<comment type="subcellular location">
    <subcellularLocation>
        <location evidence="1">Cytoplasm</location>
    </subcellularLocation>
</comment>
<comment type="similarity">
    <text evidence="1">Belongs to the RecF family.</text>
</comment>
<keyword id="KW-0067">ATP-binding</keyword>
<keyword id="KW-0963">Cytoplasm</keyword>
<keyword id="KW-0227">DNA damage</keyword>
<keyword id="KW-0234">DNA repair</keyword>
<keyword id="KW-0235">DNA replication</keyword>
<keyword id="KW-0238">DNA-binding</keyword>
<keyword id="KW-0547">Nucleotide-binding</keyword>
<keyword id="KW-0742">SOS response</keyword>
<sequence length="349" mass="40843">MYISNLRLQNFRNIPAKSFDFKNSINFIVGKNGSGKTSILESIYFLSHSRSFRSSQLNRIINHNADEFIIYTKAYNPDEITISLSRKKNSNNISKLNLEIQKNHTEITRNLPIQLINPESFNIINSGAQQRCKVLDWGAFYLDKTFLKIWQQTKFLVKQRNSALKQNYPYSYILSIDKKLCEFAEILDYKRQAYFTKLKPKIYEILSHFNPNLQLDIDYFRGWNLHKSLAQVLEESFNYDNKYKVTNHGPHKADIVLSVSHKPIQDIFSRGQQKLLICALKLAQGEIHNSENDNKCIYLIDDITSELDSIHTLTLFNYLKQLKSQVFITTTEKNKINEFIDTNSYILEI</sequence>
<evidence type="ECO:0000255" key="1">
    <source>
        <dbReference type="HAMAP-Rule" id="MF_00365"/>
    </source>
</evidence>
<name>RECF_FRAT1</name>
<organism>
    <name type="scientific">Francisella tularensis subsp. tularensis (strain FSC 198)</name>
    <dbReference type="NCBI Taxonomy" id="393115"/>
    <lineage>
        <taxon>Bacteria</taxon>
        <taxon>Pseudomonadati</taxon>
        <taxon>Pseudomonadota</taxon>
        <taxon>Gammaproteobacteria</taxon>
        <taxon>Thiotrichales</taxon>
        <taxon>Francisellaceae</taxon>
        <taxon>Francisella</taxon>
    </lineage>
</organism>
<reference key="1">
    <citation type="journal article" date="2007" name="PLoS ONE">
        <title>Genome sequencing shows that European isolates of Francisella tularensis subspecies tularensis are almost identical to US laboratory strain Schu S4.</title>
        <authorList>
            <person name="Chaudhuri R.R."/>
            <person name="Ren C.-P."/>
            <person name="Desmond L."/>
            <person name="Vincent G.A."/>
            <person name="Silman N.J."/>
            <person name="Brehm J.K."/>
            <person name="Elmore M.J."/>
            <person name="Hudson M.J."/>
            <person name="Forsman M."/>
            <person name="Isherwood K.E."/>
            <person name="Gurycova D."/>
            <person name="Minton N.P."/>
            <person name="Titball R.W."/>
            <person name="Pallen M.J."/>
            <person name="Vipond R."/>
        </authorList>
    </citation>
    <scope>NUCLEOTIDE SEQUENCE [LARGE SCALE GENOMIC DNA]</scope>
    <source>
        <strain>FSC 198</strain>
    </source>
</reference>